<name>BIOB_BRUC2</name>
<comment type="function">
    <text evidence="1">Catalyzes the conversion of dethiobiotin (DTB) to biotin by the insertion of a sulfur atom into dethiobiotin via a radical-based mechanism.</text>
</comment>
<comment type="catalytic activity">
    <reaction evidence="1">
        <text>(4R,5S)-dethiobiotin + (sulfur carrier)-SH + 2 reduced [2Fe-2S]-[ferredoxin] + 2 S-adenosyl-L-methionine = (sulfur carrier)-H + biotin + 2 5'-deoxyadenosine + 2 L-methionine + 2 oxidized [2Fe-2S]-[ferredoxin]</text>
        <dbReference type="Rhea" id="RHEA:22060"/>
        <dbReference type="Rhea" id="RHEA-COMP:10000"/>
        <dbReference type="Rhea" id="RHEA-COMP:10001"/>
        <dbReference type="Rhea" id="RHEA-COMP:14737"/>
        <dbReference type="Rhea" id="RHEA-COMP:14739"/>
        <dbReference type="ChEBI" id="CHEBI:17319"/>
        <dbReference type="ChEBI" id="CHEBI:29917"/>
        <dbReference type="ChEBI" id="CHEBI:33737"/>
        <dbReference type="ChEBI" id="CHEBI:33738"/>
        <dbReference type="ChEBI" id="CHEBI:57586"/>
        <dbReference type="ChEBI" id="CHEBI:57844"/>
        <dbReference type="ChEBI" id="CHEBI:59789"/>
        <dbReference type="ChEBI" id="CHEBI:64428"/>
        <dbReference type="ChEBI" id="CHEBI:149473"/>
        <dbReference type="EC" id="2.8.1.6"/>
    </reaction>
</comment>
<comment type="cofactor">
    <cofactor evidence="1">
        <name>[4Fe-4S] cluster</name>
        <dbReference type="ChEBI" id="CHEBI:49883"/>
    </cofactor>
    <text evidence="1">Binds 1 [4Fe-4S] cluster. The cluster is coordinated with 3 cysteines and an exchangeable S-adenosyl-L-methionine.</text>
</comment>
<comment type="cofactor">
    <cofactor evidence="1">
        <name>[2Fe-2S] cluster</name>
        <dbReference type="ChEBI" id="CHEBI:190135"/>
    </cofactor>
    <text evidence="1">Binds 1 [2Fe-2S] cluster. The cluster is coordinated with 3 cysteines and 1 arginine.</text>
</comment>
<comment type="pathway">
    <text evidence="1">Cofactor biosynthesis; biotin biosynthesis; biotin from 7,8-diaminononanoate: step 2/2.</text>
</comment>
<comment type="subunit">
    <text evidence="1">Homodimer.</text>
</comment>
<comment type="similarity">
    <text evidence="1">Belongs to the radical SAM superfamily. Biotin synthase family.</text>
</comment>
<comment type="sequence caution" evidence="3">
    <conflict type="erroneous initiation">
        <sequence resource="EMBL-CDS" id="ABX63673"/>
    </conflict>
</comment>
<keyword id="KW-0001">2Fe-2S</keyword>
<keyword id="KW-0004">4Fe-4S</keyword>
<keyword id="KW-0093">Biotin biosynthesis</keyword>
<keyword id="KW-0408">Iron</keyword>
<keyword id="KW-0411">Iron-sulfur</keyword>
<keyword id="KW-0479">Metal-binding</keyword>
<keyword id="KW-1185">Reference proteome</keyword>
<keyword id="KW-0949">S-adenosyl-L-methionine</keyword>
<keyword id="KW-0808">Transferase</keyword>
<feature type="chain" id="PRO_0000381250" description="Biotin synthase">
    <location>
        <begin position="1"/>
        <end position="328"/>
    </location>
</feature>
<feature type="domain" description="Radical SAM core" evidence="2">
    <location>
        <begin position="48"/>
        <end position="275"/>
    </location>
</feature>
<feature type="binding site" evidence="1">
    <location>
        <position position="63"/>
    </location>
    <ligand>
        <name>[4Fe-4S] cluster</name>
        <dbReference type="ChEBI" id="CHEBI:49883"/>
        <note>4Fe-4S-S-AdoMet</note>
    </ligand>
</feature>
<feature type="binding site" evidence="1">
    <location>
        <position position="67"/>
    </location>
    <ligand>
        <name>[4Fe-4S] cluster</name>
        <dbReference type="ChEBI" id="CHEBI:49883"/>
        <note>4Fe-4S-S-AdoMet</note>
    </ligand>
</feature>
<feature type="binding site" evidence="1">
    <location>
        <position position="70"/>
    </location>
    <ligand>
        <name>[4Fe-4S] cluster</name>
        <dbReference type="ChEBI" id="CHEBI:49883"/>
        <note>4Fe-4S-S-AdoMet</note>
    </ligand>
</feature>
<feature type="binding site" evidence="1">
    <location>
        <position position="107"/>
    </location>
    <ligand>
        <name>[2Fe-2S] cluster</name>
        <dbReference type="ChEBI" id="CHEBI:190135"/>
    </ligand>
</feature>
<feature type="binding site" evidence="1">
    <location>
        <position position="138"/>
    </location>
    <ligand>
        <name>[2Fe-2S] cluster</name>
        <dbReference type="ChEBI" id="CHEBI:190135"/>
    </ligand>
</feature>
<feature type="binding site" evidence="1">
    <location>
        <position position="198"/>
    </location>
    <ligand>
        <name>[2Fe-2S] cluster</name>
        <dbReference type="ChEBI" id="CHEBI:190135"/>
    </ligand>
</feature>
<feature type="binding site" evidence="1">
    <location>
        <position position="270"/>
    </location>
    <ligand>
        <name>[2Fe-2S] cluster</name>
        <dbReference type="ChEBI" id="CHEBI:190135"/>
    </ligand>
</feature>
<evidence type="ECO:0000255" key="1">
    <source>
        <dbReference type="HAMAP-Rule" id="MF_01694"/>
    </source>
</evidence>
<evidence type="ECO:0000255" key="2">
    <source>
        <dbReference type="PROSITE-ProRule" id="PRU01266"/>
    </source>
</evidence>
<evidence type="ECO:0000305" key="3"/>
<gene>
    <name evidence="1" type="primary">bioB</name>
    <name type="ordered locus">BCAN_B0494</name>
</gene>
<proteinExistence type="inferred from homology"/>
<sequence>MPDRGGENGASCSVGRWSAEEARAIYNLPFNDLLFRAHGLHRENFDPNRIQLSKLLNIKTGGCPEDCGYCSQSASAENGLKASKLMEIETVLEEARKAKAAGATRYCMGAAWRSPKDRDMPALTHMIESVKAMGLETCMTLGMLDSDKAEKLADAGLDYYNHNIDTSERFYPAVITTRSFEDRLDTLANVRNAGIKVCSGGILGLGEEAEDRIDMLVTLANLPEPPESVPINMLIPMPGTRLAKAAPVDPLEFVRVVALARILMPKSHVRLTAGRTAMSDEMQALCFFAGANSLFMGDTLLTAANPGDDRDSSLLRRLGIQAETEQPA</sequence>
<accession>A9MBD6</accession>
<reference key="1">
    <citation type="submission" date="2007-10" db="EMBL/GenBank/DDBJ databases">
        <title>Brucella canis ATCC 23365 whole genome shotgun sequencing project.</title>
        <authorList>
            <person name="Setubal J.C."/>
            <person name="Bowns C."/>
            <person name="Boyle S."/>
            <person name="Crasta O.R."/>
            <person name="Czar M.J."/>
            <person name="Dharmanolla C."/>
            <person name="Gillespie J.J."/>
            <person name="Kenyon R.W."/>
            <person name="Lu J."/>
            <person name="Mane S."/>
            <person name="Mohapatra S."/>
            <person name="Nagrani S."/>
            <person name="Purkayastha A."/>
            <person name="Rajasimha H.K."/>
            <person name="Shallom J.M."/>
            <person name="Shallom S."/>
            <person name="Shukla M."/>
            <person name="Snyder E.E."/>
            <person name="Sobral B.W."/>
            <person name="Wattam A.R."/>
            <person name="Will R."/>
            <person name="Williams K."/>
            <person name="Yoo H."/>
            <person name="Bruce D."/>
            <person name="Detter C."/>
            <person name="Munk C."/>
            <person name="Brettin T.S."/>
        </authorList>
    </citation>
    <scope>NUCLEOTIDE SEQUENCE [LARGE SCALE GENOMIC DNA]</scope>
    <source>
        <strain>ATCC 23365 / NCTC 10854 / RM-666</strain>
    </source>
</reference>
<organism>
    <name type="scientific">Brucella canis (strain ATCC 23365 / NCTC 10854 / RM-666)</name>
    <dbReference type="NCBI Taxonomy" id="483179"/>
    <lineage>
        <taxon>Bacteria</taxon>
        <taxon>Pseudomonadati</taxon>
        <taxon>Pseudomonadota</taxon>
        <taxon>Alphaproteobacteria</taxon>
        <taxon>Hyphomicrobiales</taxon>
        <taxon>Brucellaceae</taxon>
        <taxon>Brucella/Ochrobactrum group</taxon>
        <taxon>Brucella</taxon>
    </lineage>
</organism>
<protein>
    <recommendedName>
        <fullName evidence="1">Biotin synthase</fullName>
        <ecNumber evidence="1">2.8.1.6</ecNumber>
    </recommendedName>
</protein>
<dbReference type="EC" id="2.8.1.6" evidence="1"/>
<dbReference type="EMBL" id="CP000873">
    <property type="protein sequence ID" value="ABX63673.1"/>
    <property type="status" value="ALT_INIT"/>
    <property type="molecule type" value="Genomic_DNA"/>
</dbReference>
<dbReference type="SMR" id="A9MBD6"/>
<dbReference type="KEGG" id="bcs:BCAN_B0494"/>
<dbReference type="HOGENOM" id="CLU_033172_1_2_5"/>
<dbReference type="UniPathway" id="UPA00078">
    <property type="reaction ID" value="UER00162"/>
</dbReference>
<dbReference type="Proteomes" id="UP000001385">
    <property type="component" value="Chromosome II"/>
</dbReference>
<dbReference type="GO" id="GO:0051537">
    <property type="term" value="F:2 iron, 2 sulfur cluster binding"/>
    <property type="evidence" value="ECO:0007669"/>
    <property type="project" value="UniProtKB-KW"/>
</dbReference>
<dbReference type="GO" id="GO:0051539">
    <property type="term" value="F:4 iron, 4 sulfur cluster binding"/>
    <property type="evidence" value="ECO:0007669"/>
    <property type="project" value="UniProtKB-KW"/>
</dbReference>
<dbReference type="GO" id="GO:0004076">
    <property type="term" value="F:biotin synthase activity"/>
    <property type="evidence" value="ECO:0007669"/>
    <property type="project" value="UniProtKB-UniRule"/>
</dbReference>
<dbReference type="GO" id="GO:0005506">
    <property type="term" value="F:iron ion binding"/>
    <property type="evidence" value="ECO:0007669"/>
    <property type="project" value="UniProtKB-UniRule"/>
</dbReference>
<dbReference type="GO" id="GO:0009102">
    <property type="term" value="P:biotin biosynthetic process"/>
    <property type="evidence" value="ECO:0007669"/>
    <property type="project" value="UniProtKB-UniRule"/>
</dbReference>
<dbReference type="CDD" id="cd01335">
    <property type="entry name" value="Radical_SAM"/>
    <property type="match status" value="1"/>
</dbReference>
<dbReference type="Gene3D" id="3.20.20.70">
    <property type="entry name" value="Aldolase class I"/>
    <property type="match status" value="1"/>
</dbReference>
<dbReference type="HAMAP" id="MF_01694">
    <property type="entry name" value="BioB"/>
    <property type="match status" value="1"/>
</dbReference>
<dbReference type="InterPro" id="IPR013785">
    <property type="entry name" value="Aldolase_TIM"/>
</dbReference>
<dbReference type="InterPro" id="IPR010722">
    <property type="entry name" value="BATS_dom"/>
</dbReference>
<dbReference type="InterPro" id="IPR002684">
    <property type="entry name" value="Biotin_synth/BioAB"/>
</dbReference>
<dbReference type="InterPro" id="IPR024177">
    <property type="entry name" value="Biotin_synthase"/>
</dbReference>
<dbReference type="InterPro" id="IPR006638">
    <property type="entry name" value="Elp3/MiaA/NifB-like_rSAM"/>
</dbReference>
<dbReference type="InterPro" id="IPR007197">
    <property type="entry name" value="rSAM"/>
</dbReference>
<dbReference type="NCBIfam" id="TIGR00433">
    <property type="entry name" value="bioB"/>
    <property type="match status" value="1"/>
</dbReference>
<dbReference type="PANTHER" id="PTHR22976">
    <property type="entry name" value="BIOTIN SYNTHASE"/>
    <property type="match status" value="1"/>
</dbReference>
<dbReference type="PANTHER" id="PTHR22976:SF2">
    <property type="entry name" value="BIOTIN SYNTHASE, MITOCHONDRIAL"/>
    <property type="match status" value="1"/>
</dbReference>
<dbReference type="Pfam" id="PF06968">
    <property type="entry name" value="BATS"/>
    <property type="match status" value="1"/>
</dbReference>
<dbReference type="Pfam" id="PF04055">
    <property type="entry name" value="Radical_SAM"/>
    <property type="match status" value="1"/>
</dbReference>
<dbReference type="PIRSF" id="PIRSF001619">
    <property type="entry name" value="Biotin_synth"/>
    <property type="match status" value="1"/>
</dbReference>
<dbReference type="SFLD" id="SFLDF00272">
    <property type="entry name" value="biotin_synthase"/>
    <property type="match status" value="1"/>
</dbReference>
<dbReference type="SFLD" id="SFLDS00029">
    <property type="entry name" value="Radical_SAM"/>
    <property type="match status" value="1"/>
</dbReference>
<dbReference type="SMART" id="SM00876">
    <property type="entry name" value="BATS"/>
    <property type="match status" value="1"/>
</dbReference>
<dbReference type="SMART" id="SM00729">
    <property type="entry name" value="Elp3"/>
    <property type="match status" value="1"/>
</dbReference>
<dbReference type="SUPFAM" id="SSF102114">
    <property type="entry name" value="Radical SAM enzymes"/>
    <property type="match status" value="1"/>
</dbReference>
<dbReference type="PROSITE" id="PS51918">
    <property type="entry name" value="RADICAL_SAM"/>
    <property type="match status" value="1"/>
</dbReference>